<keyword id="KW-0119">Carbohydrate metabolism</keyword>
<keyword id="KW-0413">Isomerase</keyword>
<keyword id="KW-1185">Reference proteome</keyword>
<sequence>MTARELSIAGAWEITPVLRTDSRGLFFEWFTDAGFTEFAGHQFDMRQANCSVSARGVLRGVHFAQVPPSQAKYVTCVRGAVFDVVVDIRVGSPTFGQWDAVLLDDKDRRSIYISEGLGHAFLALDDDSTVMYLCSAPYAPQREHTVRPTDFGIEWPEVPELILSDRDAQAPSLAEAQAAGVLPTWADCQAFVETLRRNLVS</sequence>
<evidence type="ECO:0000250" key="1">
    <source>
        <dbReference type="UniProtKB" id="P26394"/>
    </source>
</evidence>
<evidence type="ECO:0000250" key="2">
    <source>
        <dbReference type="UniProtKB" id="P9WH11"/>
    </source>
</evidence>
<evidence type="ECO:0000250" key="3">
    <source>
        <dbReference type="UniProtKB" id="Q5SFD1"/>
    </source>
</evidence>
<evidence type="ECO:0000250" key="4">
    <source>
        <dbReference type="UniProtKB" id="Q9HU21"/>
    </source>
</evidence>
<evidence type="ECO:0000269" key="5">
    <source>
    </source>
</evidence>
<evidence type="ECO:0000305" key="6"/>
<reference key="1">
    <citation type="submission" date="2006-10" db="EMBL/GenBank/DDBJ databases">
        <authorList>
            <person name="Fleischmann R.D."/>
            <person name="Dodson R.J."/>
            <person name="Haft D.H."/>
            <person name="Merkel J.S."/>
            <person name="Nelson W.C."/>
            <person name="Fraser C.M."/>
        </authorList>
    </citation>
    <scope>NUCLEOTIDE SEQUENCE [LARGE SCALE GENOMIC DNA]</scope>
    <source>
        <strain>ATCC 700084 / mc(2)155</strain>
    </source>
</reference>
<reference key="2">
    <citation type="journal article" date="2007" name="Genome Biol.">
        <title>Interrupted coding sequences in Mycobacterium smegmatis: authentic mutations or sequencing errors?</title>
        <authorList>
            <person name="Deshayes C."/>
            <person name="Perrodou E."/>
            <person name="Gallien S."/>
            <person name="Euphrasie D."/>
            <person name="Schaeffer C."/>
            <person name="Van-Dorsselaer A."/>
            <person name="Poch O."/>
            <person name="Lecompte O."/>
            <person name="Reyrat J.-M."/>
        </authorList>
    </citation>
    <scope>NUCLEOTIDE SEQUENCE [LARGE SCALE GENOMIC DNA]</scope>
    <source>
        <strain>ATCC 700084 / mc(2)155</strain>
    </source>
</reference>
<reference key="3">
    <citation type="journal article" date="2009" name="Genome Res.">
        <title>Ortho-proteogenomics: multiple proteomes investigation through orthology and a new MS-based protocol.</title>
        <authorList>
            <person name="Gallien S."/>
            <person name="Perrodou E."/>
            <person name="Carapito C."/>
            <person name="Deshayes C."/>
            <person name="Reyrat J.-M."/>
            <person name="Van Dorsselaer A."/>
            <person name="Poch O."/>
            <person name="Schaeffer C."/>
            <person name="Lecompte O."/>
        </authorList>
    </citation>
    <scope>NUCLEOTIDE SEQUENCE [LARGE SCALE GENOMIC DNA]</scope>
    <source>
        <strain>ATCC 700084 / mc(2)155</strain>
    </source>
</reference>
<reference key="4">
    <citation type="journal article" date="2006" name="Biochem. Biophys. Res. Commun.">
        <title>rmlB and rmlC genes are essential for growth of mycobacteria.</title>
        <authorList>
            <person name="Li W."/>
            <person name="Xin Y."/>
            <person name="McNeil M.R."/>
            <person name="Ma Y."/>
        </authorList>
    </citation>
    <scope>FUNCTION IN DTDP-RHAMNOSE BIOSYNTHESIS</scope>
    <scope>CATALYTIC ACTIVITY</scope>
</reference>
<name>RMLC_MYCS2</name>
<gene>
    <name type="primary">rmlC</name>
    <name type="ordered locus">MSMEG_1510</name>
    <name type="ordered locus">MSMEI_1475</name>
</gene>
<accession>A0QSK5</accession>
<accession>I7FGH4</accession>
<proteinExistence type="evidence at protein level"/>
<feature type="chain" id="PRO_0000399899" description="dTDP-4-dehydrorhamnose 3,5-epimerase">
    <location>
        <begin position="1"/>
        <end position="201"/>
    </location>
</feature>
<feature type="active site" description="Proton acceptor" evidence="4">
    <location>
        <position position="62"/>
    </location>
</feature>
<feature type="active site" description="Proton donor" evidence="4">
    <location>
        <position position="132"/>
    </location>
</feature>
<feature type="binding site" evidence="4">
    <location>
        <position position="23"/>
    </location>
    <ligand>
        <name>substrate</name>
    </ligand>
</feature>
<feature type="binding site" evidence="4">
    <location>
        <position position="28"/>
    </location>
    <ligand>
        <name>substrate</name>
    </ligand>
</feature>
<feature type="binding site" evidence="4">
    <location>
        <begin position="47"/>
        <end position="49"/>
    </location>
    <ligand>
        <name>substrate</name>
    </ligand>
</feature>
<feature type="binding site" evidence="4">
    <location>
        <position position="59"/>
    </location>
    <ligand>
        <name>substrate</name>
    </ligand>
</feature>
<feature type="binding site" evidence="4">
    <location>
        <position position="72"/>
    </location>
    <ligand>
        <name>substrate</name>
    </ligand>
</feature>
<feature type="binding site" evidence="4">
    <location>
        <position position="119"/>
    </location>
    <ligand>
        <name>substrate</name>
    </ligand>
</feature>
<feature type="binding site" evidence="4">
    <location>
        <position position="143"/>
    </location>
    <ligand>
        <name>substrate</name>
    </ligand>
</feature>
<feature type="binding site" evidence="4">
    <location>
        <position position="166"/>
    </location>
    <ligand>
        <name>substrate</name>
    </ligand>
</feature>
<feature type="site" description="Participates in a stacking interaction with the thymidine ring of dTDP-4-oxo-6-deoxyglucose" evidence="3">
    <location>
        <position position="138"/>
    </location>
</feature>
<organism>
    <name type="scientific">Mycolicibacterium smegmatis (strain ATCC 700084 / mc(2)155)</name>
    <name type="common">Mycobacterium smegmatis</name>
    <dbReference type="NCBI Taxonomy" id="246196"/>
    <lineage>
        <taxon>Bacteria</taxon>
        <taxon>Bacillati</taxon>
        <taxon>Actinomycetota</taxon>
        <taxon>Actinomycetes</taxon>
        <taxon>Mycobacteriales</taxon>
        <taxon>Mycobacteriaceae</taxon>
        <taxon>Mycolicibacterium</taxon>
    </lineage>
</organism>
<protein>
    <recommendedName>
        <fullName evidence="6">dTDP-4-dehydrorhamnose 3,5-epimerase</fullName>
        <ecNumber evidence="5">5.1.3.13</ecNumber>
    </recommendedName>
    <alternativeName>
        <fullName evidence="6">Thymidine diphospho-4-keto-rhamnose 3,5-epimerase</fullName>
    </alternativeName>
    <alternativeName>
        <fullName evidence="6">dTDP-4-keto-6-deoxyglucose 3,5-epimerase</fullName>
    </alternativeName>
    <alternativeName>
        <fullName evidence="6">dTDP-6-deoxy-D-xylo-4-hexulose 3,5-epimerase</fullName>
    </alternativeName>
    <alternativeName>
        <fullName evidence="6">dTDP-L-rhamnose synthase</fullName>
    </alternativeName>
</protein>
<dbReference type="EC" id="5.1.3.13" evidence="5"/>
<dbReference type="EMBL" id="CP000480">
    <property type="protein sequence ID" value="ABK71239.1"/>
    <property type="molecule type" value="Genomic_DNA"/>
</dbReference>
<dbReference type="EMBL" id="CP001663">
    <property type="protein sequence ID" value="AFP37948.1"/>
    <property type="molecule type" value="Genomic_DNA"/>
</dbReference>
<dbReference type="RefSeq" id="WP_011727714.1">
    <property type="nucleotide sequence ID" value="NZ_SIJM01000016.1"/>
</dbReference>
<dbReference type="RefSeq" id="YP_885893.1">
    <property type="nucleotide sequence ID" value="NC_008596.1"/>
</dbReference>
<dbReference type="SMR" id="A0QSK5"/>
<dbReference type="STRING" id="246196.MSMEG_1510"/>
<dbReference type="PaxDb" id="246196-MSMEI_1475"/>
<dbReference type="KEGG" id="msb:LJ00_07550"/>
<dbReference type="KEGG" id="msg:MSMEI_1475"/>
<dbReference type="KEGG" id="msm:MSMEG_1510"/>
<dbReference type="PATRIC" id="fig|246196.19.peg.1496"/>
<dbReference type="eggNOG" id="COG1898">
    <property type="taxonomic scope" value="Bacteria"/>
</dbReference>
<dbReference type="OrthoDB" id="9800680at2"/>
<dbReference type="UniPathway" id="UPA00124"/>
<dbReference type="Proteomes" id="UP000000757">
    <property type="component" value="Chromosome"/>
</dbReference>
<dbReference type="Proteomes" id="UP000006158">
    <property type="component" value="Chromosome"/>
</dbReference>
<dbReference type="GO" id="GO:0005829">
    <property type="term" value="C:cytosol"/>
    <property type="evidence" value="ECO:0007669"/>
    <property type="project" value="TreeGrafter"/>
</dbReference>
<dbReference type="GO" id="GO:0008830">
    <property type="term" value="F:dTDP-4-dehydrorhamnose 3,5-epimerase activity"/>
    <property type="evidence" value="ECO:0000316"/>
    <property type="project" value="UniProtKB"/>
</dbReference>
<dbReference type="GO" id="GO:0019305">
    <property type="term" value="P:dTDP-rhamnose biosynthetic process"/>
    <property type="evidence" value="ECO:0007669"/>
    <property type="project" value="UniProtKB-UniPathway"/>
</dbReference>
<dbReference type="GO" id="GO:0000271">
    <property type="term" value="P:polysaccharide biosynthetic process"/>
    <property type="evidence" value="ECO:0000316"/>
    <property type="project" value="UniProtKB"/>
</dbReference>
<dbReference type="CDD" id="cd00438">
    <property type="entry name" value="cupin_RmlC"/>
    <property type="match status" value="1"/>
</dbReference>
<dbReference type="FunFam" id="2.60.120.10:FF:000165">
    <property type="entry name" value="dTDP-4-dehydrorhamnose 3,5-epimerase"/>
    <property type="match status" value="1"/>
</dbReference>
<dbReference type="Gene3D" id="2.60.120.10">
    <property type="entry name" value="Jelly Rolls"/>
    <property type="match status" value="1"/>
</dbReference>
<dbReference type="InterPro" id="IPR000888">
    <property type="entry name" value="RmlC-like"/>
</dbReference>
<dbReference type="InterPro" id="IPR014710">
    <property type="entry name" value="RmlC-like_jellyroll"/>
</dbReference>
<dbReference type="InterPro" id="IPR011051">
    <property type="entry name" value="RmlC_Cupin_sf"/>
</dbReference>
<dbReference type="PANTHER" id="PTHR21047">
    <property type="entry name" value="DTDP-6-DEOXY-D-GLUCOSE-3,5 EPIMERASE"/>
    <property type="match status" value="1"/>
</dbReference>
<dbReference type="PANTHER" id="PTHR21047:SF2">
    <property type="entry name" value="THYMIDINE DIPHOSPHO-4-KETO-RHAMNOSE 3,5-EPIMERASE"/>
    <property type="match status" value="1"/>
</dbReference>
<dbReference type="Pfam" id="PF00908">
    <property type="entry name" value="dTDP_sugar_isom"/>
    <property type="match status" value="1"/>
</dbReference>
<dbReference type="SUPFAM" id="SSF51182">
    <property type="entry name" value="RmlC-like cupins"/>
    <property type="match status" value="1"/>
</dbReference>
<comment type="function">
    <text evidence="5">Catalyzes the epimerization of the C3' and C5'positions of dTDP-6-deoxy-D-xylo-4-hexulose, forming dTDP-6-deoxy-L-lyxo-4-hexulose. Involved in the biosynthesis of the dTDP-L-rhamnose which is a component of the critical linker, D-N-acetylglucosamine-L-rhamnose disaccharide, which connects the galactan region of arabinogalactan to peptidoglycan via a phosphodiester linkage.</text>
</comment>
<comment type="catalytic activity">
    <reaction evidence="5">
        <text>dTDP-4-dehydro-6-deoxy-alpha-D-glucose = dTDP-4-dehydro-beta-L-rhamnose</text>
        <dbReference type="Rhea" id="RHEA:16969"/>
        <dbReference type="ChEBI" id="CHEBI:57649"/>
        <dbReference type="ChEBI" id="CHEBI:62830"/>
        <dbReference type="EC" id="5.1.3.13"/>
    </reaction>
</comment>
<comment type="pathway">
    <text evidence="1">Carbohydrate biosynthesis; dTDP-L-rhamnose biosynthesis.</text>
</comment>
<comment type="subunit">
    <text evidence="2">Homodimer.</text>
</comment>
<comment type="similarity">
    <text evidence="6">Belongs to the dTDP-4-dehydrorhamnose 3,5-epimerase family.</text>
</comment>